<reference key="1">
    <citation type="journal article" date="1999" name="Biochem. Biophys. Res. Commun.">
        <title>Cloning and characterization of a mammalian N-acetylglucosamine-6-sulfotransferase that is highly restricted to intestinal tissue.</title>
        <authorList>
            <person name="Lee J.K."/>
            <person name="Bhakta S."/>
            <person name="Rosen S.D."/>
            <person name="Hemmerich S."/>
        </authorList>
    </citation>
    <scope>NUCLEOTIDE SEQUENCE [GENOMIC DNA / MRNA] (ISOFORMS 1 AND 2)</scope>
    <scope>FUNCTION</scope>
    <scope>TISSUE SPECIFICITY</scope>
    <source>
        <tissue>Intestine</tissue>
    </source>
</reference>
<reference key="2">
    <citation type="journal article" date="2000" name="Nat. Genet.">
        <title>Macular corneal dystrophy type I and type II are caused by distinct mutations in a new sulphotransferase gene.</title>
        <authorList>
            <person name="Akama T.O."/>
            <person name="Nishida K."/>
            <person name="Nakayama J."/>
            <person name="Watanabe H."/>
            <person name="Ozaki K."/>
            <person name="Nakamura T."/>
            <person name="Dota A."/>
            <person name="Kawasaki S."/>
            <person name="Inoue Y."/>
            <person name="Maeda N."/>
            <person name="Yamamoto S."/>
            <person name="Fujiwara T."/>
            <person name="Thonar E.J.-M.A."/>
            <person name="Shimomura Y."/>
            <person name="Kinoshita S."/>
            <person name="Tanigami A."/>
            <person name="Fukuda M.N."/>
        </authorList>
    </citation>
    <scope>NUCLEOTIDE SEQUENCE [GENOMIC DNA / MRNA] (ISOFORM 1)</scope>
    <scope>TISSUE SPECIFICITY</scope>
</reference>
<reference key="3">
    <citation type="submission" date="2005-09" db="EMBL/GenBank/DDBJ databases">
        <authorList>
            <person name="Mural R.J."/>
            <person name="Istrail S."/>
            <person name="Sutton G.G."/>
            <person name="Florea L."/>
            <person name="Halpern A.L."/>
            <person name="Mobarry C.M."/>
            <person name="Lippert R."/>
            <person name="Walenz B."/>
            <person name="Shatkay H."/>
            <person name="Dew I."/>
            <person name="Miller J.R."/>
            <person name="Flanigan M.J."/>
            <person name="Edwards N.J."/>
            <person name="Bolanos R."/>
            <person name="Fasulo D."/>
            <person name="Halldorsson B.V."/>
            <person name="Hannenhalli S."/>
            <person name="Turner R."/>
            <person name="Yooseph S."/>
            <person name="Lu F."/>
            <person name="Nusskern D.R."/>
            <person name="Shue B.C."/>
            <person name="Zheng X.H."/>
            <person name="Zhong F."/>
            <person name="Delcher A.L."/>
            <person name="Huson D.H."/>
            <person name="Kravitz S.A."/>
            <person name="Mouchard L."/>
            <person name="Reinert K."/>
            <person name="Remington K.A."/>
            <person name="Clark A.G."/>
            <person name="Waterman M.S."/>
            <person name="Eichler E.E."/>
            <person name="Adams M.D."/>
            <person name="Hunkapiller M.W."/>
            <person name="Myers E.W."/>
            <person name="Venter J.C."/>
        </authorList>
    </citation>
    <scope>NUCLEOTIDE SEQUENCE [LARGE SCALE GENOMIC DNA]</scope>
</reference>
<reference key="4">
    <citation type="journal article" date="2004" name="Genome Res.">
        <title>The status, quality, and expansion of the NIH full-length cDNA project: the Mammalian Gene Collection (MGC).</title>
        <authorList>
            <consortium name="The MGC Project Team"/>
        </authorList>
    </citation>
    <scope>NUCLEOTIDE SEQUENCE [LARGE SCALE MRNA] (ISOFORM 1)</scope>
    <source>
        <tissue>Brain</tissue>
    </source>
</reference>
<reference key="5">
    <citation type="journal article" date="2001" name="Biochem. Biophys. Res. Commun.">
        <title>Sulfation of endothelial mucin by corneal keratan N-acetylglucosamine 6-O-sulfotransferase (GST-4beta).</title>
        <authorList>
            <person name="Bartes A."/>
            <person name="Bhakta S."/>
            <person name="Hemmerich S."/>
        </authorList>
    </citation>
    <scope>FUNCTION</scope>
    <scope>TISSUE SPECIFICITY</scope>
</reference>
<reference key="6">
    <citation type="journal article" date="2002" name="Glycobiology">
        <title>Ectopic expression of a GlcNAc 6-O-sulfotransferase, GlcNAc6ST-2, in colonic mucinous adenocarcinoma.</title>
        <authorList>
            <person name="Seko A."/>
            <person name="Nagata K."/>
            <person name="Yonezawa S."/>
            <person name="Yamashita K."/>
        </authorList>
    </citation>
    <scope>TISSUE SPECIFICITY</scope>
</reference>
<reference key="7">
    <citation type="journal article" date="2002" name="J. Biol. Chem.">
        <title>Enzymatic synthesis in vitro of the disulfated disaccharide unit of corneal keratan sulfate.</title>
        <authorList>
            <person name="Akama T.O."/>
            <person name="Misra A.K."/>
            <person name="Hindsgaul O."/>
            <person name="Fukuda M.N."/>
        </authorList>
    </citation>
    <scope>FUNCTION</scope>
    <scope>SUBSTRATE SPECIFICITY</scope>
</reference>
<reference key="8">
    <citation type="journal article" date="2003" name="Glycobiology">
        <title>Activities and expression pattern of the carbohydrate sulfotransferase GlcNAc6ST-3 (I-GlcNAc6ST): functional implications.</title>
        <authorList>
            <person name="Lee J.K."/>
            <person name="Bistrup A."/>
            <person name="van Zante A."/>
            <person name="Rosen S.D."/>
        </authorList>
    </citation>
    <scope>SUBSTRATE SPECIFICITY</scope>
    <scope>FUNCTION</scope>
    <scope>TISSUE SPECIFICITY</scope>
</reference>
<reference key="9">
    <citation type="journal article" date="2003" name="J. Biol. Chem.">
        <title>Golgi localization of carbohydrate sulfotransferases is a determinant of L-selectin ligand biosynthesis.</title>
        <authorList>
            <person name="de Graffenried C.L."/>
            <person name="Bertozzi C.R."/>
        </authorList>
    </citation>
    <scope>SUBCELLULAR LOCATION</scope>
</reference>
<feature type="chain" id="PRO_0000085195" description="Carbohydrate sulfotransferase 5">
    <location>
        <begin position="1"/>
        <end position="411"/>
    </location>
</feature>
<feature type="topological domain" description="Cytoplasmic" evidence="2">
    <location>
        <begin position="1"/>
        <end position="30"/>
    </location>
</feature>
<feature type="transmembrane region" description="Helical; Signal-anchor for type II membrane protein" evidence="2">
    <location>
        <begin position="31"/>
        <end position="48"/>
    </location>
</feature>
<feature type="topological domain" description="Lumenal" evidence="2">
    <location>
        <begin position="49"/>
        <end position="411"/>
    </location>
</feature>
<feature type="binding site" evidence="1">
    <location>
        <begin position="71"/>
        <end position="77"/>
    </location>
    <ligand>
        <name>3'-phosphoadenylyl sulfate</name>
        <dbReference type="ChEBI" id="CHEBI:58339"/>
    </ligand>
</feature>
<feature type="binding site" evidence="1">
    <location>
        <begin position="224"/>
        <end position="232"/>
    </location>
    <ligand>
        <name>3'-phosphoadenylyl sulfate</name>
        <dbReference type="ChEBI" id="CHEBI:58339"/>
    </ligand>
</feature>
<feature type="glycosylation site" description="N-linked (GlcNAc...) asparagine" evidence="2">
    <location>
        <position position="138"/>
    </location>
</feature>
<feature type="glycosylation site" description="N-linked (GlcNAc...) asparagine" evidence="2">
    <location>
        <position position="327"/>
    </location>
</feature>
<feature type="glycosylation site" description="N-linked (GlcNAc...) asparagine" evidence="2">
    <location>
        <position position="350"/>
    </location>
</feature>
<feature type="splice variant" id="VSP_037526" description="In isoform 2." evidence="9">
    <original>MGMRARVPKVAHSTRR</original>
    <variation>MSRHLPWICDQRCSSPSSPGRW</variation>
    <location>
        <begin position="1"/>
        <end position="16"/>
    </location>
</feature>
<feature type="sequence variant" id="VAR_057993" description="In dbSNP:rs7206332.">
    <original>A</original>
    <variation>T</variation>
    <location>
        <position position="311"/>
    </location>
</feature>
<feature type="sequence variant" id="VAR_021416" description="In dbSNP:rs3826107.">
    <original>T</original>
    <variation>M</variation>
    <location>
        <position position="318"/>
    </location>
</feature>
<organism>
    <name type="scientific">Homo sapiens</name>
    <name type="common">Human</name>
    <dbReference type="NCBI Taxonomy" id="9606"/>
    <lineage>
        <taxon>Eukaryota</taxon>
        <taxon>Metazoa</taxon>
        <taxon>Chordata</taxon>
        <taxon>Craniata</taxon>
        <taxon>Vertebrata</taxon>
        <taxon>Euteleostomi</taxon>
        <taxon>Mammalia</taxon>
        <taxon>Eutheria</taxon>
        <taxon>Euarchontoglires</taxon>
        <taxon>Primates</taxon>
        <taxon>Haplorrhini</taxon>
        <taxon>Catarrhini</taxon>
        <taxon>Hominidae</taxon>
        <taxon>Homo</taxon>
    </lineage>
</organism>
<protein>
    <recommendedName>
        <fullName>Carbohydrate sulfotransferase 5</fullName>
        <ecNumber>2.8.2.-</ecNumber>
    </recommendedName>
    <alternativeName>
        <fullName>Galactose/N-acetylglucosamine/N-acetylglucosamine 6-O-sulfotransferase 4-alpha</fullName>
        <shortName>GST4-alpha</shortName>
    </alternativeName>
    <alternativeName>
        <fullName>Intestinal N-acetylglucosamine-6-O-sulfotransferase</fullName>
        <shortName>I-GlcNAc6ST</shortName>
        <shortName>Intestinal GlcNAc-6-sulfotransferase</shortName>
        <shortName>hIGn6ST</shortName>
    </alternativeName>
    <alternativeName>
        <fullName>N-acetylglucosamine 6-O-sulfotransferase 3</fullName>
        <shortName>GlcNAc6ST-3</shortName>
        <shortName>Gn6st-3</shortName>
    </alternativeName>
</protein>
<gene>
    <name type="primary">CHST5</name>
</gene>
<sequence length="411" mass="46161">MGMRARVPKVAHSTRRPPAARMWLPRFSSKTVTVLLLAQTTCLLLFIISRPGPSSPAGGEDRVHVLVLSSWRSGSSFLGQLFSQHPDVFYLMEPAWHVWTTLSQGSAATLHMAVRDLMRSIFLCDMDVFDAYMPQSRNLSAFFNWATSRALCSPPACSAFPRGTISKQDVCKTLCTRQPFSLAREACRSYSHVVLKEVRFFNLQVLYPLLSDPALNLRIVHLVRDPRAVLRSREAAGPILARDNGIVLGTNGKWVEADPHLRLIREVCRSHVRIAEAATLKPPPFLRGRYRLVRFEDLAREPLAEIRALYAFTGLTLTPQLEAWIHNITHGSGIGKPIEAFHTSSRNARNVSQAWRHALPFTKILRVQEVCAGALQLLGYRPVYSADQQRDLTLDLVLPRGPDHFSWASPD</sequence>
<evidence type="ECO:0000250" key="1"/>
<evidence type="ECO:0000255" key="2"/>
<evidence type="ECO:0000269" key="3">
    <source>
    </source>
</evidence>
<evidence type="ECO:0000269" key="4">
    <source>
    </source>
</evidence>
<evidence type="ECO:0000269" key="5">
    <source>
    </source>
</evidence>
<evidence type="ECO:0000269" key="6">
    <source>
    </source>
</evidence>
<evidence type="ECO:0000269" key="7">
    <source>
    </source>
</evidence>
<evidence type="ECO:0000269" key="8">
    <source>
    </source>
</evidence>
<evidence type="ECO:0000303" key="9">
    <source>
    </source>
</evidence>
<evidence type="ECO:0000305" key="10"/>
<evidence type="ECO:0000305" key="11">
    <source>
    </source>
</evidence>
<proteinExistence type="evidence at protein level"/>
<keyword id="KW-0025">Alternative splicing</keyword>
<keyword id="KW-0119">Carbohydrate metabolism</keyword>
<keyword id="KW-0325">Glycoprotein</keyword>
<keyword id="KW-0333">Golgi apparatus</keyword>
<keyword id="KW-0472">Membrane</keyword>
<keyword id="KW-1267">Proteomics identification</keyword>
<keyword id="KW-1185">Reference proteome</keyword>
<keyword id="KW-0735">Signal-anchor</keyword>
<keyword id="KW-0808">Transferase</keyword>
<keyword id="KW-0812">Transmembrane</keyword>
<keyword id="KW-1133">Transmembrane helix</keyword>
<comment type="function">
    <text evidence="3 5 7 8">Sulfotransferase that utilizes 3'-phospho-5'-adenylyl sulfate (PAPS) as sulfonate donor to catalyze the transfer of sulfate to position 6 of non-reducing N-acetylglucosamine (GlcNAc) residues and O-linked sugars of mucin-type acceptors. Acts on the non-reducing terminal GlcNAc of short carbohydrate substrates. However, it does not transfer sulfate to longer carbohydrate substrates that have poly-N-acetyllactosamine structures. Has no activity toward keratan. Not involved in generating HEV-expressed ligands for SELL. Its substrate specificity may be influenced by its subcellular location.</text>
</comment>
<comment type="subcellular location">
    <subcellularLocation>
        <location evidence="11">Golgi apparatus membrane</location>
        <topology evidence="11">Single-pass type II membrane protein</topology>
    </subcellularLocation>
    <text>Golgi membrane, early secretory pathway.</text>
</comment>
<comment type="alternative products">
    <event type="alternative splicing"/>
    <isoform>
        <id>Q9GZS9-1</id>
        <name>1</name>
        <sequence type="displayed"/>
    </isoform>
    <isoform>
        <id>Q9GZS9-2</id>
        <name>2</name>
        <sequence type="described" ref="VSP_037526"/>
    </isoform>
</comment>
<comment type="tissue specificity">
    <text evidence="3 4 5 6 8">Predominantly expressed in small and large intestines and colon. Weakly expressed in lymphocytes. Not expressed in other tissues. Down-regulated in colonic adenocarcinomas.</text>
</comment>
<comment type="similarity">
    <text evidence="10">Belongs to the sulfotransferase 1 family. Gal/GlcNAc/GalNAc subfamily.</text>
</comment>
<comment type="sequence caution" evidence="10">
    <conflict type="erroneous initiation">
        <sequence resource="EMBL-CDS" id="AAD56000"/>
    </conflict>
</comment>
<comment type="sequence caution" evidence="10">
    <conflict type="erroneous initiation">
        <sequence resource="EMBL-CDS" id="AAD56001"/>
    </conflict>
</comment>
<name>CHST5_HUMAN</name>
<accession>Q9GZS9</accession>
<accession>B2RV23</accession>
<accession>Q7LCN3</accession>
<accession>Q9UBY3</accession>
<dbReference type="EC" id="2.8.2.-"/>
<dbReference type="EMBL" id="AF176838">
    <property type="protein sequence ID" value="AAD56000.1"/>
    <property type="status" value="ALT_INIT"/>
    <property type="molecule type" value="mRNA"/>
</dbReference>
<dbReference type="EMBL" id="AF176839">
    <property type="protein sequence ID" value="AAD56001.1"/>
    <property type="status" value="ALT_INIT"/>
    <property type="molecule type" value="Genomic_DNA"/>
</dbReference>
<dbReference type="EMBL" id="AF246718">
    <property type="protein sequence ID" value="AAG28023.1"/>
    <property type="molecule type" value="mRNA"/>
</dbReference>
<dbReference type="EMBL" id="AF219991">
    <property type="protein sequence ID" value="AAG26326.1"/>
    <property type="molecule type" value="Genomic_DNA"/>
</dbReference>
<dbReference type="EMBL" id="CH471114">
    <property type="protein sequence ID" value="EAW95635.1"/>
    <property type="molecule type" value="Genomic_DNA"/>
</dbReference>
<dbReference type="EMBL" id="BC147002">
    <property type="protein sequence ID" value="AAI47003.1"/>
    <property type="molecule type" value="mRNA"/>
</dbReference>
<dbReference type="EMBL" id="BC147007">
    <property type="protein sequence ID" value="AAI47008.1"/>
    <property type="molecule type" value="mRNA"/>
</dbReference>
<dbReference type="CCDS" id="CCDS10919.1">
    <molecule id="Q9GZS9-1"/>
</dbReference>
<dbReference type="RefSeq" id="NP_078809.2">
    <molecule id="Q9GZS9-1"/>
    <property type="nucleotide sequence ID" value="NM_024533.4"/>
</dbReference>
<dbReference type="BioGRID" id="117106">
    <property type="interactions" value="46"/>
</dbReference>
<dbReference type="FunCoup" id="Q9GZS9">
    <property type="interactions" value="241"/>
</dbReference>
<dbReference type="IntAct" id="Q9GZS9">
    <property type="interactions" value="33"/>
</dbReference>
<dbReference type="MINT" id="Q9GZS9"/>
<dbReference type="STRING" id="9606.ENSP00000338783"/>
<dbReference type="GlyCosmos" id="Q9GZS9">
    <property type="glycosylation" value="3 sites, No reported glycans"/>
</dbReference>
<dbReference type="GlyGen" id="Q9GZS9">
    <property type="glycosylation" value="4 sites, 1 O-linked glycan (1 site)"/>
</dbReference>
<dbReference type="iPTMnet" id="Q9GZS9"/>
<dbReference type="PhosphoSitePlus" id="Q9GZS9"/>
<dbReference type="BioMuta" id="CHST5"/>
<dbReference type="DMDM" id="239938912"/>
<dbReference type="jPOST" id="Q9GZS9"/>
<dbReference type="MassIVE" id="Q9GZS9"/>
<dbReference type="PaxDb" id="9606-ENSP00000338783"/>
<dbReference type="PeptideAtlas" id="Q9GZS9"/>
<dbReference type="ProteomicsDB" id="80127">
    <molecule id="Q9GZS9-1"/>
</dbReference>
<dbReference type="ProteomicsDB" id="80128">
    <molecule id="Q9GZS9-2"/>
</dbReference>
<dbReference type="Antibodypedia" id="30316">
    <property type="antibodies" value="99 antibodies from 19 providers"/>
</dbReference>
<dbReference type="DNASU" id="23563"/>
<dbReference type="Ensembl" id="ENST00000336257.8">
    <molecule id="Q9GZS9-1"/>
    <property type="protein sequence ID" value="ENSP00000338783.3"/>
    <property type="gene ID" value="ENSG00000135702.15"/>
</dbReference>
<dbReference type="GeneID" id="23563"/>
<dbReference type="KEGG" id="hsa:23563"/>
<dbReference type="MANE-Select" id="ENST00000336257.8">
    <property type="protein sequence ID" value="ENSP00000338783.3"/>
    <property type="RefSeq nucleotide sequence ID" value="NM_024533.5"/>
    <property type="RefSeq protein sequence ID" value="NP_078809.2"/>
</dbReference>
<dbReference type="UCSC" id="uc002fei.4">
    <molecule id="Q9GZS9-1"/>
    <property type="organism name" value="human"/>
</dbReference>
<dbReference type="AGR" id="HGNC:1973"/>
<dbReference type="CTD" id="23563"/>
<dbReference type="DisGeNET" id="23563"/>
<dbReference type="GeneCards" id="CHST5"/>
<dbReference type="HGNC" id="HGNC:1973">
    <property type="gene designation" value="CHST5"/>
</dbReference>
<dbReference type="HPA" id="ENSG00000135702">
    <property type="expression patterns" value="Tissue enriched (intestine)"/>
</dbReference>
<dbReference type="MIM" id="604817">
    <property type="type" value="gene"/>
</dbReference>
<dbReference type="neXtProt" id="NX_Q9GZS9"/>
<dbReference type="OpenTargets" id="ENSG00000135702"/>
<dbReference type="PharmGKB" id="PA26505"/>
<dbReference type="VEuPathDB" id="HostDB:ENSG00000135702"/>
<dbReference type="eggNOG" id="ENOG502QQMD">
    <property type="taxonomic scope" value="Eukaryota"/>
</dbReference>
<dbReference type="GeneTree" id="ENSGT00940000162788"/>
<dbReference type="HOGENOM" id="CLU_028381_3_1_1"/>
<dbReference type="InParanoid" id="Q9GZS9"/>
<dbReference type="OMA" id="CKTLCTR"/>
<dbReference type="OrthoDB" id="6138663at2759"/>
<dbReference type="PAN-GO" id="Q9GZS9">
    <property type="GO annotations" value="4 GO annotations based on evolutionary models"/>
</dbReference>
<dbReference type="PhylomeDB" id="Q9GZS9"/>
<dbReference type="TreeFam" id="TF342871"/>
<dbReference type="PathwayCommons" id="Q9GZS9"/>
<dbReference type="Reactome" id="R-HSA-2022854">
    <property type="pathway name" value="Keratan sulfate biosynthesis"/>
</dbReference>
<dbReference type="SABIO-RK" id="Q9GZS9"/>
<dbReference type="BioGRID-ORCS" id="23563">
    <property type="hits" value="8 hits in 1142 CRISPR screens"/>
</dbReference>
<dbReference type="GeneWiki" id="CHST5"/>
<dbReference type="GenomeRNAi" id="23563"/>
<dbReference type="Pharos" id="Q9GZS9">
    <property type="development level" value="Tbio"/>
</dbReference>
<dbReference type="PRO" id="PR:Q9GZS9"/>
<dbReference type="Proteomes" id="UP000005640">
    <property type="component" value="Chromosome 16"/>
</dbReference>
<dbReference type="RNAct" id="Q9GZS9">
    <property type="molecule type" value="protein"/>
</dbReference>
<dbReference type="Bgee" id="ENSG00000135702">
    <property type="expression patterns" value="Expressed in duodenum and 87 other cell types or tissues"/>
</dbReference>
<dbReference type="ExpressionAtlas" id="Q9GZS9">
    <property type="expression patterns" value="baseline and differential"/>
</dbReference>
<dbReference type="GO" id="GO:0005794">
    <property type="term" value="C:Golgi apparatus"/>
    <property type="evidence" value="ECO:0000314"/>
    <property type="project" value="UniProtKB"/>
</dbReference>
<dbReference type="GO" id="GO:0000139">
    <property type="term" value="C:Golgi membrane"/>
    <property type="evidence" value="ECO:0000304"/>
    <property type="project" value="Reactome"/>
</dbReference>
<dbReference type="GO" id="GO:0016020">
    <property type="term" value="C:membrane"/>
    <property type="evidence" value="ECO:0000304"/>
    <property type="project" value="ProtInc"/>
</dbReference>
<dbReference type="GO" id="GO:0005802">
    <property type="term" value="C:trans-Golgi network"/>
    <property type="evidence" value="ECO:0000318"/>
    <property type="project" value="GO_Central"/>
</dbReference>
<dbReference type="GO" id="GO:0001517">
    <property type="term" value="F:N-acetylglucosamine 6-O-sulfotransferase activity"/>
    <property type="evidence" value="ECO:0000314"/>
    <property type="project" value="UniProtKB"/>
</dbReference>
<dbReference type="GO" id="GO:0008146">
    <property type="term" value="F:sulfotransferase activity"/>
    <property type="evidence" value="ECO:0000304"/>
    <property type="project" value="ProtInc"/>
</dbReference>
<dbReference type="GO" id="GO:0005975">
    <property type="term" value="P:carbohydrate metabolic process"/>
    <property type="evidence" value="ECO:0007669"/>
    <property type="project" value="InterPro"/>
</dbReference>
<dbReference type="GO" id="GO:0018146">
    <property type="term" value="P:keratan sulfate proteoglycan biosynthetic process"/>
    <property type="evidence" value="ECO:0000318"/>
    <property type="project" value="GO_Central"/>
</dbReference>
<dbReference type="GO" id="GO:0006044">
    <property type="term" value="P:N-acetylglucosamine metabolic process"/>
    <property type="evidence" value="ECO:0000314"/>
    <property type="project" value="UniProtKB"/>
</dbReference>
<dbReference type="GO" id="GO:0006477">
    <property type="term" value="P:protein sulfation"/>
    <property type="evidence" value="ECO:0000304"/>
    <property type="project" value="ProtInc"/>
</dbReference>
<dbReference type="GO" id="GO:0006790">
    <property type="term" value="P:sulfur compound metabolic process"/>
    <property type="evidence" value="ECO:0000314"/>
    <property type="project" value="UniProtKB"/>
</dbReference>
<dbReference type="FunFam" id="3.40.50.300:FF:000703">
    <property type="entry name" value="Sulfotransferase"/>
    <property type="match status" value="1"/>
</dbReference>
<dbReference type="Gene3D" id="3.40.50.300">
    <property type="entry name" value="P-loop containing nucleotide triphosphate hydrolases"/>
    <property type="match status" value="1"/>
</dbReference>
<dbReference type="InterPro" id="IPR016469">
    <property type="entry name" value="Carbohydrate_sulfotransferase"/>
</dbReference>
<dbReference type="InterPro" id="IPR051135">
    <property type="entry name" value="Gal/GlcNAc/GalNAc_ST"/>
</dbReference>
<dbReference type="InterPro" id="IPR027417">
    <property type="entry name" value="P-loop_NTPase"/>
</dbReference>
<dbReference type="InterPro" id="IPR000863">
    <property type="entry name" value="Sulfotransferase_dom"/>
</dbReference>
<dbReference type="PANTHER" id="PTHR10704">
    <property type="entry name" value="CARBOHYDRATE SULFOTRANSFERASE"/>
    <property type="match status" value="1"/>
</dbReference>
<dbReference type="PANTHER" id="PTHR10704:SF13">
    <property type="entry name" value="CARBOHYDRATE SULFOTRANSFERASE 5"/>
    <property type="match status" value="1"/>
</dbReference>
<dbReference type="Pfam" id="PF00685">
    <property type="entry name" value="Sulfotransfer_1"/>
    <property type="match status" value="1"/>
</dbReference>
<dbReference type="PIRSF" id="PIRSF005883">
    <property type="entry name" value="Carbohydrate_sulfotransferase"/>
    <property type="match status" value="1"/>
</dbReference>
<dbReference type="SUPFAM" id="SSF52540">
    <property type="entry name" value="P-loop containing nucleoside triphosphate hydrolases"/>
    <property type="match status" value="1"/>
</dbReference>